<comment type="function">
    <text>Plant lipoxygenases may be involved in a number of diverse aspects of plant physiology including growth and development, pest resistance, and senescence or responses to wounding. Catalyzes the hydroperoxidation of lipids containing a cis,cis-1,4-pentadiene structure. Linoleic and linolenic acids are the preferred substrates, but is also active with arachidonic acid. The products are almost exclusively the S enantiomers.</text>
</comment>
<comment type="catalytic activity">
    <reaction evidence="5 6">
        <text>(9Z,12Z)-octadecadienoate + O2 = (9S)-hydroperoxy-(10E,12Z)-octadecadienoate</text>
        <dbReference type="Rhea" id="RHEA:30291"/>
        <dbReference type="ChEBI" id="CHEBI:15379"/>
        <dbReference type="ChEBI" id="CHEBI:30245"/>
        <dbReference type="ChEBI" id="CHEBI:60955"/>
        <dbReference type="EC" id="1.13.11.58"/>
    </reaction>
</comment>
<comment type="cofactor">
    <cofactor evidence="3">
        <name>Fe cation</name>
        <dbReference type="ChEBI" id="CHEBI:24875"/>
    </cofactor>
    <text evidence="3">Binds 1 Fe cation per subunit. Iron is tightly bound.</text>
</comment>
<comment type="biophysicochemical properties">
    <phDependence>
        <text evidence="6">Optimum pH is 5.5-7.0.</text>
    </phDependence>
</comment>
<comment type="pathway">
    <text evidence="3">Lipid metabolism; oxylipin biosynthesis.</text>
</comment>
<comment type="subunit">
    <text evidence="1">Monomer.</text>
</comment>
<comment type="subcellular location">
    <subcellularLocation>
        <location evidence="3">Cytoplasm</location>
    </subcellularLocation>
</comment>
<comment type="tissue specificity">
    <text>Expressed in tubers and roots. Detected in leaves, petioles and stems.</text>
</comment>
<comment type="induction">
    <text>Up-regulated in stored tubers 8 hours after wounding and by jasmonate. Down-regulated in growing tubers containing already high levels of LOX1.5 at the time of wounding.</text>
</comment>
<comment type="similarity">
    <text evidence="7">Belongs to the lipoxygenase family.</text>
</comment>
<organism>
    <name type="scientific">Solanum tuberosum</name>
    <name type="common">Potato</name>
    <dbReference type="NCBI Taxonomy" id="4113"/>
    <lineage>
        <taxon>Eukaryota</taxon>
        <taxon>Viridiplantae</taxon>
        <taxon>Streptophyta</taxon>
        <taxon>Embryophyta</taxon>
        <taxon>Tracheophyta</taxon>
        <taxon>Spermatophyta</taxon>
        <taxon>Magnoliopsida</taxon>
        <taxon>eudicotyledons</taxon>
        <taxon>Gunneridae</taxon>
        <taxon>Pentapetalae</taxon>
        <taxon>asterids</taxon>
        <taxon>lamiids</taxon>
        <taxon>Solanales</taxon>
        <taxon>Solanaceae</taxon>
        <taxon>Solanoideae</taxon>
        <taxon>Solaneae</taxon>
        <taxon>Solanum</taxon>
    </lineage>
</organism>
<accession>Q41238</accession>
<feature type="chain" id="PRO_0000412924" description="Linoleate 9S-lipoxygenase 6">
    <location>
        <begin position="1" status="less than"/>
        <end position="857"/>
    </location>
</feature>
<feature type="domain" description="PLAT" evidence="2">
    <location>
        <begin position="26"/>
        <end position="156"/>
    </location>
</feature>
<feature type="domain" description="Lipoxygenase" evidence="3">
    <location>
        <begin position="159"/>
        <end position="857"/>
    </location>
</feature>
<feature type="region of interest" description="Disordered" evidence="4">
    <location>
        <begin position="205"/>
        <end position="243"/>
    </location>
</feature>
<feature type="compositionally biased region" description="Polar residues" evidence="4">
    <location>
        <begin position="208"/>
        <end position="218"/>
    </location>
</feature>
<feature type="binding site" evidence="3">
    <location>
        <position position="518"/>
    </location>
    <ligand>
        <name>Fe cation</name>
        <dbReference type="ChEBI" id="CHEBI:24875"/>
        <note>catalytic</note>
    </ligand>
</feature>
<feature type="binding site" evidence="3">
    <location>
        <position position="523"/>
    </location>
    <ligand>
        <name>Fe cation</name>
        <dbReference type="ChEBI" id="CHEBI:24875"/>
        <note>catalytic</note>
    </ligand>
</feature>
<feature type="binding site" evidence="3">
    <location>
        <position position="709"/>
    </location>
    <ligand>
        <name>Fe cation</name>
        <dbReference type="ChEBI" id="CHEBI:24875"/>
        <note>catalytic</note>
    </ligand>
</feature>
<feature type="binding site" evidence="3">
    <location>
        <position position="713"/>
    </location>
    <ligand>
        <name>Fe cation</name>
        <dbReference type="ChEBI" id="CHEBI:24875"/>
        <note>catalytic</note>
    </ligand>
</feature>
<feature type="binding site" evidence="3">
    <location>
        <position position="857"/>
    </location>
    <ligand>
        <name>Fe cation</name>
        <dbReference type="ChEBI" id="CHEBI:24875"/>
        <note>catalytic</note>
    </ligand>
</feature>
<feature type="mutagenesis site" description="Altered specificity against arachidonic acid." evidence="5">
    <original>V</original>
    <variation>F</variation>
    <location>
        <position position="576"/>
    </location>
</feature>
<feature type="non-terminal residue">
    <location>
        <position position="1"/>
    </location>
</feature>
<dbReference type="EC" id="1.13.11.58"/>
<dbReference type="EMBL" id="S73865">
    <property type="protein sequence ID" value="AAB31252.1"/>
    <property type="molecule type" value="mRNA"/>
</dbReference>
<dbReference type="SMR" id="Q41238"/>
<dbReference type="FunCoup" id="Q41238">
    <property type="interactions" value="87"/>
</dbReference>
<dbReference type="STRING" id="4113.Q41238"/>
<dbReference type="KEGG" id="ag:AAB31252"/>
<dbReference type="InParanoid" id="Q41238"/>
<dbReference type="UniPathway" id="UPA00382"/>
<dbReference type="Proteomes" id="UP000011115">
    <property type="component" value="Unassembled WGS sequence"/>
</dbReference>
<dbReference type="ExpressionAtlas" id="Q41238">
    <property type="expression patterns" value="baseline and differential"/>
</dbReference>
<dbReference type="GO" id="GO:0005737">
    <property type="term" value="C:cytoplasm"/>
    <property type="evidence" value="ECO:0007669"/>
    <property type="project" value="UniProtKB-SubCell"/>
</dbReference>
<dbReference type="GO" id="GO:1990136">
    <property type="term" value="F:linoleate 9S-lipoxygenase activity"/>
    <property type="evidence" value="ECO:0007669"/>
    <property type="project" value="UniProtKB-EC"/>
</dbReference>
<dbReference type="GO" id="GO:0046872">
    <property type="term" value="F:metal ion binding"/>
    <property type="evidence" value="ECO:0007669"/>
    <property type="project" value="UniProtKB-KW"/>
</dbReference>
<dbReference type="GO" id="GO:0016702">
    <property type="term" value="F:oxidoreductase activity, acting on single donors with incorporation of molecular oxygen, incorporation of two atoms of oxygen"/>
    <property type="evidence" value="ECO:0000318"/>
    <property type="project" value="GO_Central"/>
</dbReference>
<dbReference type="GO" id="GO:0006633">
    <property type="term" value="P:fatty acid biosynthetic process"/>
    <property type="evidence" value="ECO:0007669"/>
    <property type="project" value="UniProtKB-KW"/>
</dbReference>
<dbReference type="GO" id="GO:0034440">
    <property type="term" value="P:lipid oxidation"/>
    <property type="evidence" value="ECO:0000318"/>
    <property type="project" value="GO_Central"/>
</dbReference>
<dbReference type="GO" id="GO:0031408">
    <property type="term" value="P:oxylipin biosynthetic process"/>
    <property type="evidence" value="ECO:0007669"/>
    <property type="project" value="UniProtKB-UniPathway"/>
</dbReference>
<dbReference type="CDD" id="cd01751">
    <property type="entry name" value="PLAT_LH2"/>
    <property type="match status" value="1"/>
</dbReference>
<dbReference type="FunFam" id="1.20.245.10:FF:000002">
    <property type="entry name" value="Lipoxygenase"/>
    <property type="match status" value="1"/>
</dbReference>
<dbReference type="FunFam" id="2.60.60.20:FF:000015">
    <property type="entry name" value="Lipoxygenase"/>
    <property type="match status" value="1"/>
</dbReference>
<dbReference type="FunFam" id="3.10.450.60:FF:000002">
    <property type="entry name" value="Lipoxygenase"/>
    <property type="match status" value="1"/>
</dbReference>
<dbReference type="FunFam" id="4.10.372.10:FF:000001">
    <property type="entry name" value="Lipoxygenase"/>
    <property type="match status" value="1"/>
</dbReference>
<dbReference type="FunFam" id="4.10.375.10:FF:000001">
    <property type="entry name" value="Lipoxygenase"/>
    <property type="match status" value="1"/>
</dbReference>
<dbReference type="Gene3D" id="3.10.450.60">
    <property type="match status" value="1"/>
</dbReference>
<dbReference type="Gene3D" id="4.10.375.10">
    <property type="entry name" value="Lipoxygenase-1, Domain 2"/>
    <property type="match status" value="1"/>
</dbReference>
<dbReference type="Gene3D" id="4.10.372.10">
    <property type="entry name" value="Lipoxygenase-1, Domain 3"/>
    <property type="match status" value="1"/>
</dbReference>
<dbReference type="Gene3D" id="1.20.245.10">
    <property type="entry name" value="Lipoxygenase-1, Domain 5"/>
    <property type="match status" value="1"/>
</dbReference>
<dbReference type="Gene3D" id="2.60.60.20">
    <property type="entry name" value="PLAT/LH2 domain"/>
    <property type="match status" value="1"/>
</dbReference>
<dbReference type="InterPro" id="IPR000907">
    <property type="entry name" value="LipOase"/>
</dbReference>
<dbReference type="InterPro" id="IPR013819">
    <property type="entry name" value="LipOase_C"/>
</dbReference>
<dbReference type="InterPro" id="IPR036226">
    <property type="entry name" value="LipOase_C_sf"/>
</dbReference>
<dbReference type="InterPro" id="IPR020834">
    <property type="entry name" value="LipOase_CS"/>
</dbReference>
<dbReference type="InterPro" id="IPR020833">
    <property type="entry name" value="LipOase_Fe_BS"/>
</dbReference>
<dbReference type="InterPro" id="IPR001246">
    <property type="entry name" value="LipOase_plant"/>
</dbReference>
<dbReference type="InterPro" id="IPR042057">
    <property type="entry name" value="Lipoxy_PLAT/LH2"/>
</dbReference>
<dbReference type="InterPro" id="IPR027433">
    <property type="entry name" value="Lipoxygenase_dom_3"/>
</dbReference>
<dbReference type="InterPro" id="IPR001024">
    <property type="entry name" value="PLAT/LH2_dom"/>
</dbReference>
<dbReference type="InterPro" id="IPR036392">
    <property type="entry name" value="PLAT/LH2_dom_sf"/>
</dbReference>
<dbReference type="PANTHER" id="PTHR11771">
    <property type="entry name" value="LIPOXYGENASE"/>
    <property type="match status" value="1"/>
</dbReference>
<dbReference type="Pfam" id="PF00305">
    <property type="entry name" value="Lipoxygenase"/>
    <property type="match status" value="1"/>
</dbReference>
<dbReference type="Pfam" id="PF01477">
    <property type="entry name" value="PLAT"/>
    <property type="match status" value="1"/>
</dbReference>
<dbReference type="PRINTS" id="PR00087">
    <property type="entry name" value="LIPOXYGENASE"/>
</dbReference>
<dbReference type="PRINTS" id="PR00468">
    <property type="entry name" value="PLTLPOXGNASE"/>
</dbReference>
<dbReference type="SMART" id="SM00308">
    <property type="entry name" value="LH2"/>
    <property type="match status" value="1"/>
</dbReference>
<dbReference type="SUPFAM" id="SSF49723">
    <property type="entry name" value="Lipase/lipooxygenase domain (PLAT/LH2 domain)"/>
    <property type="match status" value="1"/>
</dbReference>
<dbReference type="SUPFAM" id="SSF48484">
    <property type="entry name" value="Lipoxigenase"/>
    <property type="match status" value="1"/>
</dbReference>
<dbReference type="PROSITE" id="PS00711">
    <property type="entry name" value="LIPOXYGENASE_1"/>
    <property type="match status" value="1"/>
</dbReference>
<dbReference type="PROSITE" id="PS00081">
    <property type="entry name" value="LIPOXYGENASE_2"/>
    <property type="match status" value="1"/>
</dbReference>
<dbReference type="PROSITE" id="PS51393">
    <property type="entry name" value="LIPOXYGENASE_3"/>
    <property type="match status" value="1"/>
</dbReference>
<dbReference type="PROSITE" id="PS50095">
    <property type="entry name" value="PLAT"/>
    <property type="match status" value="1"/>
</dbReference>
<name>LOX16_SOLTU</name>
<proteinExistence type="evidence at protein level"/>
<gene>
    <name type="primary">LOX1.6</name>
</gene>
<evidence type="ECO:0000250" key="1"/>
<evidence type="ECO:0000255" key="2">
    <source>
        <dbReference type="PROSITE-ProRule" id="PRU00152"/>
    </source>
</evidence>
<evidence type="ECO:0000255" key="3">
    <source>
        <dbReference type="PROSITE-ProRule" id="PRU00726"/>
    </source>
</evidence>
<evidence type="ECO:0000256" key="4">
    <source>
        <dbReference type="SAM" id="MobiDB-lite"/>
    </source>
</evidence>
<evidence type="ECO:0000269" key="5">
    <source>
    </source>
</evidence>
<evidence type="ECO:0000269" key="6">
    <source>
    </source>
</evidence>
<evidence type="ECO:0000305" key="7"/>
<keyword id="KW-0963">Cytoplasm</keyword>
<keyword id="KW-0223">Dioxygenase</keyword>
<keyword id="KW-0275">Fatty acid biosynthesis</keyword>
<keyword id="KW-0276">Fatty acid metabolism</keyword>
<keyword id="KW-0408">Iron</keyword>
<keyword id="KW-0444">Lipid biosynthesis</keyword>
<keyword id="KW-0443">Lipid metabolism</keyword>
<keyword id="KW-0479">Metal-binding</keyword>
<keyword id="KW-0560">Oxidoreductase</keyword>
<keyword id="KW-0925">Oxylipin biosynthesis</keyword>
<keyword id="KW-1185">Reference proteome</keyword>
<protein>
    <recommendedName>
        <fullName>Linoleate 9S-lipoxygenase 6</fullName>
        <ecNumber>1.13.11.58</ecNumber>
    </recommendedName>
    <alternativeName>
        <fullName>Lipoxygenase 1-5</fullName>
        <shortName>StLOX1</shortName>
        <shortName>lox1:St:3</shortName>
    </alternativeName>
</protein>
<reference key="1">
    <citation type="journal article" date="1994" name="Plant Physiol.">
        <title>Expression of lipoxygenase in wounded tubers of Solanum tuberosum L.</title>
        <authorList>
            <person name="Geerts A."/>
            <person name="Feltkamp D."/>
            <person name="Rosahl S."/>
        </authorList>
    </citation>
    <scope>NUCLEOTIDE SEQUENCE [MRNA]</scope>
    <scope>CATALYTIC ACTIVITY</scope>
    <scope>BIOPHYSICOCHEMICAL PROPERTIES</scope>
    <source>
        <strain>cv. Desiree</strain>
    </source>
</reference>
<reference key="2">
    <citation type="journal article" date="2009" name="Lipids">
        <title>On the substrate binding of linoleate 9-lipoxygenases.</title>
        <authorList>
            <person name="Andreou A.Z."/>
            <person name="Hornung E."/>
            <person name="Kunze S."/>
            <person name="Rosahl S."/>
            <person name="Feussner I."/>
        </authorList>
    </citation>
    <scope>CATALYTIC ACTIVITY</scope>
    <scope>MUTAGENESIS OF VAL-576</scope>
</reference>
<sequence>QIVGGLIGGHHDSKKVKGTVVMMKKNALDFTDLAGSLTDKIFEALGQKVSFQLISSVQSDPANGLQGKHSNPAYLENFLFTLTPLAAGETAFGVTFDWNEEFGVPGAFIIKNTHINEFFLKSLTLEDVPNHGKVHFVCNSWVYPSFRYKSDRIFFANQPYLPSETPELLRKYRENELLTLRGDGTGKREAWDRIYDYDVYNDLGNPDQGEQNVRTTLGGSADYPYPRRGRTGRPPTRTDPKSESRIPLILSLDIYVPRDERFGHLKMSDFLTYALKSIVQFILPELHALFDGTPNEFDSFEDVLRLYEGGIKLPQGPLFKALTAAIPLEMMKELLRTDGEGILRFPTPLVIKDSKTAWRTDEEFAREMLAGVNPIIISRLQEFPPKSKLDPEAYGNQNSTITAEHIEDKLDGLTVDEAMNNNKLFILNHHDVLIPYLRRINTTTTKTYASRTLLFLQDNGSLKPLAIELSLPHPDGDQFGVISKVYTPSDQGVESSIWQLAKAYVAVNDSGVHQLISHWLNTHAVIEPFVIATNRQLSVLHPIHKLLYPHFRDTMNINAMARQILINAGGVLESTVFPSKFAMEMSAVVYKDWVFPDQALPADLVKRGVAVEDSSSPHGVRLLIEDYPYAVDGLEIWSAIKSWVTDYCSFYYGSDEEILKDNELQAWWKELREVGHGDKKNEPWWPEMETPQELIDSCTTIIWIASALHAAVNFGQYPYAGYLPNRPTVSRRFMPEPGTPEYEELKKNPDKAFLKTITAQLQTLLGVSLIEILSRHTTDEIYLGQRESPEWTKDKEPLAAFDKFGKKLTDIEKQIIQRNGDNILTNRSGPVNAPYTLLFPTSEGGLTGKGIPNSVSI</sequence>